<reference key="1">
    <citation type="journal article" date="2006" name="J. Bacteriol.">
        <title>Comparative genomic analysis of three strains of Ehrlichia ruminantium reveals an active process of genome size plasticity.</title>
        <authorList>
            <person name="Frutos R."/>
            <person name="Viari A."/>
            <person name="Ferraz C."/>
            <person name="Morgat A."/>
            <person name="Eychenie S."/>
            <person name="Kandassamy Y."/>
            <person name="Chantal I."/>
            <person name="Bensaid A."/>
            <person name="Coissac E."/>
            <person name="Vachiery N."/>
            <person name="Demaille J."/>
            <person name="Martinez D."/>
        </authorList>
    </citation>
    <scope>NUCLEOTIDE SEQUENCE [LARGE SCALE GENOMIC DNA]</scope>
    <source>
        <strain>Gardel</strain>
    </source>
</reference>
<comment type="function">
    <text evidence="1">Binds the lower part of the 30S subunit head. Binds mRNA in the 70S ribosome, positioning it for translation.</text>
</comment>
<comment type="subunit">
    <text evidence="1">Part of the 30S ribosomal subunit. Forms a tight complex with proteins S10 and S14.</text>
</comment>
<comment type="similarity">
    <text evidence="1">Belongs to the universal ribosomal protein uS3 family.</text>
</comment>
<comment type="sequence caution" evidence="2">
    <conflict type="erroneous initiation">
        <sequence resource="EMBL-CDS" id="CAI28075"/>
    </conflict>
</comment>
<protein>
    <recommendedName>
        <fullName evidence="1">Small ribosomal subunit protein uS3</fullName>
    </recommendedName>
    <alternativeName>
        <fullName evidence="2">30S ribosomal protein S3</fullName>
    </alternativeName>
</protein>
<evidence type="ECO:0000255" key="1">
    <source>
        <dbReference type="HAMAP-Rule" id="MF_01309"/>
    </source>
</evidence>
<evidence type="ECO:0000305" key="2"/>
<dbReference type="EMBL" id="CR925677">
    <property type="protein sequence ID" value="CAI28075.1"/>
    <property type="status" value="ALT_INIT"/>
    <property type="molecule type" value="Genomic_DNA"/>
</dbReference>
<dbReference type="RefSeq" id="WP_011255721.1">
    <property type="nucleotide sequence ID" value="NC_006831.1"/>
</dbReference>
<dbReference type="SMR" id="Q5FFU6"/>
<dbReference type="KEGG" id="erg:ERGA_CDS_06230"/>
<dbReference type="HOGENOM" id="CLU_058591_0_2_5"/>
<dbReference type="OrthoDB" id="9806396at2"/>
<dbReference type="Proteomes" id="UP000000533">
    <property type="component" value="Chromosome"/>
</dbReference>
<dbReference type="GO" id="GO:0022627">
    <property type="term" value="C:cytosolic small ribosomal subunit"/>
    <property type="evidence" value="ECO:0007669"/>
    <property type="project" value="TreeGrafter"/>
</dbReference>
<dbReference type="GO" id="GO:0003729">
    <property type="term" value="F:mRNA binding"/>
    <property type="evidence" value="ECO:0007669"/>
    <property type="project" value="UniProtKB-UniRule"/>
</dbReference>
<dbReference type="GO" id="GO:0019843">
    <property type="term" value="F:rRNA binding"/>
    <property type="evidence" value="ECO:0007669"/>
    <property type="project" value="UniProtKB-UniRule"/>
</dbReference>
<dbReference type="GO" id="GO:0003735">
    <property type="term" value="F:structural constituent of ribosome"/>
    <property type="evidence" value="ECO:0007669"/>
    <property type="project" value="InterPro"/>
</dbReference>
<dbReference type="GO" id="GO:0006412">
    <property type="term" value="P:translation"/>
    <property type="evidence" value="ECO:0007669"/>
    <property type="project" value="UniProtKB-UniRule"/>
</dbReference>
<dbReference type="CDD" id="cd02412">
    <property type="entry name" value="KH-II_30S_S3"/>
    <property type="match status" value="1"/>
</dbReference>
<dbReference type="FunFam" id="3.30.1140.32:FF:000002">
    <property type="entry name" value="30S ribosomal protein S3"/>
    <property type="match status" value="1"/>
</dbReference>
<dbReference type="FunFam" id="3.30.300.20:FF:000001">
    <property type="entry name" value="30S ribosomal protein S3"/>
    <property type="match status" value="1"/>
</dbReference>
<dbReference type="Gene3D" id="3.30.300.20">
    <property type="match status" value="1"/>
</dbReference>
<dbReference type="Gene3D" id="3.30.1140.32">
    <property type="entry name" value="Ribosomal protein S3, C-terminal domain"/>
    <property type="match status" value="1"/>
</dbReference>
<dbReference type="HAMAP" id="MF_01309_B">
    <property type="entry name" value="Ribosomal_uS3_B"/>
    <property type="match status" value="1"/>
</dbReference>
<dbReference type="InterPro" id="IPR004087">
    <property type="entry name" value="KH_dom"/>
</dbReference>
<dbReference type="InterPro" id="IPR015946">
    <property type="entry name" value="KH_dom-like_a/b"/>
</dbReference>
<dbReference type="InterPro" id="IPR004044">
    <property type="entry name" value="KH_dom_type_2"/>
</dbReference>
<dbReference type="InterPro" id="IPR009019">
    <property type="entry name" value="KH_sf_prok-type"/>
</dbReference>
<dbReference type="InterPro" id="IPR036419">
    <property type="entry name" value="Ribosomal_S3_C_sf"/>
</dbReference>
<dbReference type="InterPro" id="IPR005704">
    <property type="entry name" value="Ribosomal_uS3_bac-typ"/>
</dbReference>
<dbReference type="InterPro" id="IPR001351">
    <property type="entry name" value="Ribosomal_uS3_C"/>
</dbReference>
<dbReference type="InterPro" id="IPR018280">
    <property type="entry name" value="Ribosomal_uS3_CS"/>
</dbReference>
<dbReference type="NCBIfam" id="TIGR01009">
    <property type="entry name" value="rpsC_bact"/>
    <property type="match status" value="1"/>
</dbReference>
<dbReference type="PANTHER" id="PTHR11760">
    <property type="entry name" value="30S/40S RIBOSOMAL PROTEIN S3"/>
    <property type="match status" value="1"/>
</dbReference>
<dbReference type="PANTHER" id="PTHR11760:SF19">
    <property type="entry name" value="SMALL RIBOSOMAL SUBUNIT PROTEIN US3C"/>
    <property type="match status" value="1"/>
</dbReference>
<dbReference type="Pfam" id="PF07650">
    <property type="entry name" value="KH_2"/>
    <property type="match status" value="1"/>
</dbReference>
<dbReference type="Pfam" id="PF00189">
    <property type="entry name" value="Ribosomal_S3_C"/>
    <property type="match status" value="1"/>
</dbReference>
<dbReference type="SMART" id="SM00322">
    <property type="entry name" value="KH"/>
    <property type="match status" value="1"/>
</dbReference>
<dbReference type="SUPFAM" id="SSF54814">
    <property type="entry name" value="Prokaryotic type KH domain (KH-domain type II)"/>
    <property type="match status" value="1"/>
</dbReference>
<dbReference type="SUPFAM" id="SSF54821">
    <property type="entry name" value="Ribosomal protein S3 C-terminal domain"/>
    <property type="match status" value="1"/>
</dbReference>
<dbReference type="PROSITE" id="PS50823">
    <property type="entry name" value="KH_TYPE_2"/>
    <property type="match status" value="1"/>
</dbReference>
<dbReference type="PROSITE" id="PS00548">
    <property type="entry name" value="RIBOSOMAL_S3"/>
    <property type="match status" value="1"/>
</dbReference>
<gene>
    <name evidence="1" type="primary">rpsC</name>
    <name type="ordered locus">ERGA_CDS_06230</name>
</gene>
<organism>
    <name type="scientific">Ehrlichia ruminantium (strain Gardel)</name>
    <dbReference type="NCBI Taxonomy" id="302409"/>
    <lineage>
        <taxon>Bacteria</taxon>
        <taxon>Pseudomonadati</taxon>
        <taxon>Pseudomonadota</taxon>
        <taxon>Alphaproteobacteria</taxon>
        <taxon>Rickettsiales</taxon>
        <taxon>Anaplasmataceae</taxon>
        <taxon>Ehrlichia</taxon>
    </lineage>
</organism>
<keyword id="KW-0687">Ribonucleoprotein</keyword>
<keyword id="KW-0689">Ribosomal protein</keyword>
<keyword id="KW-0694">RNA-binding</keyword>
<keyword id="KW-0699">rRNA-binding</keyword>
<name>RS3_EHRRG</name>
<accession>Q5FFU6</accession>
<feature type="chain" id="PRO_0000230698" description="Small ribosomal subunit protein uS3">
    <location>
        <begin position="1"/>
        <end position="211"/>
    </location>
</feature>
<feature type="domain" description="KH type-2" evidence="1">
    <location>
        <begin position="38"/>
        <end position="106"/>
    </location>
</feature>
<sequence length="211" mass="23843">MGQKSNPIGLRLKIINTWDSLWYANKDYTTKLHEDFLLRKFIKKAFYHASISKVVIARKVDVIMVNVYSAKPGVIIGKKGADIDKVKQKIVKMINNNIELNIIEVKKPELKAILIAENIAQQLERRVSFRRAMKRSVQSCLKIGAKGIKVSCAGRLGGAEIARTEWYKEGSVPLHTFRANIDYGFSEAKTIYGIIGVKVWVYLGETKSSNE</sequence>
<proteinExistence type="inferred from homology"/>